<sequence>GSCIESGKSCTHSRSMKNGLCCPKSRCNCRQIQHRHDYLGKRKYSCRCS</sequence>
<dbReference type="ArachnoServer" id="AS000256">
    <property type="toxin name" value="omega-segestritoxin-Sf1a"/>
</dbReference>
<dbReference type="GO" id="GO:0005576">
    <property type="term" value="C:extracellular region"/>
    <property type="evidence" value="ECO:0007669"/>
    <property type="project" value="UniProtKB-SubCell"/>
</dbReference>
<dbReference type="GO" id="GO:0005246">
    <property type="term" value="F:calcium channel regulator activity"/>
    <property type="evidence" value="ECO:0007669"/>
    <property type="project" value="UniProtKB-KW"/>
</dbReference>
<dbReference type="GO" id="GO:0090729">
    <property type="term" value="F:toxin activity"/>
    <property type="evidence" value="ECO:0007669"/>
    <property type="project" value="UniProtKB-KW"/>
</dbReference>
<proteinExistence type="evidence at protein level"/>
<accession>P58605</accession>
<keyword id="KW-0108">Calcium channel impairing toxin</keyword>
<keyword id="KW-0903">Direct protein sequencing</keyword>
<keyword id="KW-1015">Disulfide bond</keyword>
<keyword id="KW-0872">Ion channel impairing toxin</keyword>
<keyword id="KW-0960">Knottin</keyword>
<keyword id="KW-0528">Neurotoxin</keyword>
<keyword id="KW-0964">Secreted</keyword>
<keyword id="KW-0800">Toxin</keyword>
<keyword id="KW-1218">Voltage-gated calcium channel impairing toxin</keyword>
<feature type="chain" id="PRO_0000087674" description="Omega-segestritoxin-Sf1a">
    <location>
        <begin position="1"/>
        <end position="49"/>
    </location>
</feature>
<feature type="disulfide bond" evidence="2">
    <location>
        <begin position="3"/>
        <end position="22"/>
    </location>
</feature>
<feature type="disulfide bond" evidence="2">
    <location>
        <begin position="10"/>
        <end position="27"/>
    </location>
</feature>
<feature type="disulfide bond" evidence="2">
    <location>
        <begin position="21"/>
        <end position="48"/>
    </location>
</feature>
<feature type="disulfide bond" evidence="2">
    <location>
        <begin position="29"/>
        <end position="46"/>
    </location>
</feature>
<reference key="1">
    <citation type="journal article" date="1995" name="Biochemistry">
        <title>SNX-325, a novel calcium antagonist from the spider Segestria florentina.</title>
        <authorList>
            <person name="Newcomb R."/>
            <person name="Palma A."/>
            <person name="Fox J."/>
            <person name="Gaur S."/>
            <person name="Lau K."/>
            <person name="Chung D."/>
            <person name="Cong R."/>
            <person name="Bell J.R."/>
            <person name="Horne B."/>
            <person name="Nadasdi L."/>
        </authorList>
    </citation>
    <scope>PROTEIN SEQUENCE</scope>
    <scope>SYNTHESIS</scope>
    <scope>FUNCTION</scope>
    <source>
        <tissue>Venom</tissue>
    </source>
</reference>
<protein>
    <recommendedName>
        <fullName>Omega-segestritoxin-Sf1a</fullName>
        <shortName>Omega-SGTX-Sf1a</shortName>
    </recommendedName>
    <alternativeName>
        <fullName>Toxin SNX-325</fullName>
    </alternativeName>
</protein>
<evidence type="ECO:0000269" key="1">
    <source>
    </source>
</evidence>
<evidence type="ECO:0000305" key="2"/>
<evidence type="ECO:0000305" key="3">
    <source>
    </source>
</evidence>
<organism>
    <name type="scientific">Segestria florentina</name>
    <name type="common">Tube-web spider</name>
    <name type="synonym">Segestria gracilis</name>
    <dbReference type="NCBI Taxonomy" id="31925"/>
    <lineage>
        <taxon>Eukaryota</taxon>
        <taxon>Metazoa</taxon>
        <taxon>Ecdysozoa</taxon>
        <taxon>Arthropoda</taxon>
        <taxon>Chelicerata</taxon>
        <taxon>Arachnida</taxon>
        <taxon>Araneae</taxon>
        <taxon>Araneomorphae</taxon>
        <taxon>Haplogynae</taxon>
        <taxon>Dysderoidea</taxon>
        <taxon>Segestriidae</taxon>
        <taxon>Segestria</taxon>
    </lineage>
</organism>
<name>TX325_SEGFL</name>
<comment type="function">
    <text evidence="1">Potent and selective blocker of N-type voltage-gated calcium channels (Cav2.2/CACNA1B). Also blocks vertebrate Cav2.1/CACNA1A (P/Q-type) and Cav1.2/CACNA1C (L-type) channels at very high concentration (2 micromolar).</text>
</comment>
<comment type="subcellular location">
    <subcellularLocation>
        <location>Secreted</location>
    </subcellularLocation>
</comment>
<comment type="tissue specificity">
    <text>Expressed by the venom gland.</text>
</comment>
<comment type="domain">
    <text evidence="2">The presence of a 'disulfide through disulfide knot' structurally defines this protein as a knottin.</text>
</comment>
<comment type="miscellaneous">
    <text evidence="3">Negative results: this toxin does not inhibit sodium and potassium channels.</text>
</comment>